<comment type="function">
    <text>A possible function for this protein is to guide the assembly of the membrane sector of the ATPase enzyme complex.</text>
</comment>
<comment type="subcellular location">
    <subcellularLocation>
        <location evidence="2">Cell membrane</location>
        <topology evidence="2">Multi-pass membrane protein</topology>
    </subcellularLocation>
</comment>
<comment type="similarity">
    <text evidence="2">Belongs to the bacterial AtpI family.</text>
</comment>
<feature type="chain" id="PRO_0000071715" description="ATP synthase protein I">
    <location>
        <begin position="1"/>
        <end position="144"/>
    </location>
</feature>
<feature type="transmembrane region" description="Helical" evidence="1">
    <location>
        <begin position="12"/>
        <end position="32"/>
    </location>
</feature>
<feature type="transmembrane region" description="Helical" evidence="1">
    <location>
        <begin position="37"/>
        <end position="57"/>
    </location>
</feature>
<feature type="transmembrane region" description="Helical" evidence="1">
    <location>
        <begin position="70"/>
        <end position="90"/>
    </location>
</feature>
<feature type="transmembrane region" description="Helical" evidence="1">
    <location>
        <begin position="95"/>
        <end position="115"/>
    </location>
</feature>
<protein>
    <recommendedName>
        <fullName>ATP synthase protein I</fullName>
    </recommendedName>
</protein>
<accession>P0A303</accession>
<accession>P50015</accession>
<name>ATPZ_STRLI</name>
<organism>
    <name type="scientific">Streptomyces lividans</name>
    <dbReference type="NCBI Taxonomy" id="1916"/>
    <lineage>
        <taxon>Bacteria</taxon>
        <taxon>Bacillati</taxon>
        <taxon>Actinomycetota</taxon>
        <taxon>Actinomycetes</taxon>
        <taxon>Kitasatosporales</taxon>
        <taxon>Streptomycetaceae</taxon>
        <taxon>Streptomyces</taxon>
    </lineage>
</organism>
<dbReference type="EMBL" id="Z22606">
    <property type="protein sequence ID" value="CAA80320.1"/>
    <property type="molecule type" value="Genomic_DNA"/>
</dbReference>
<dbReference type="PIR" id="S37540">
    <property type="entry name" value="S37540"/>
</dbReference>
<dbReference type="GO" id="GO:0005886">
    <property type="term" value="C:plasma membrane"/>
    <property type="evidence" value="ECO:0007669"/>
    <property type="project" value="UniProtKB-SubCell"/>
</dbReference>
<dbReference type="GO" id="GO:0045259">
    <property type="term" value="C:proton-transporting ATP synthase complex"/>
    <property type="evidence" value="ECO:0007669"/>
    <property type="project" value="UniProtKB-KW"/>
</dbReference>
<dbReference type="GO" id="GO:1902600">
    <property type="term" value="P:proton transmembrane transport"/>
    <property type="evidence" value="ECO:0007669"/>
    <property type="project" value="UniProtKB-KW"/>
</dbReference>
<sequence length="144" mass="15062">MPSNDVRILLQAAVPAAAVGAVAAVVSAVVAGGKGAVGAVVATVLAMLFMGIGLYVLQRTAKSLPHLFQAMGLMLYAAQILLLFVFLAAFKNTTLFNPRSFAVSLLVVTLAWIAAQTRAHMKAKVLYVEPEPTGEKPEKTGHSS</sequence>
<gene>
    <name type="primary">atpI</name>
</gene>
<reference key="1">
    <citation type="journal article" date="1995" name="Gene">
        <title>The ATP synthase (F1F0) of Streptomyces lividans: sequencing of the atp operon and phylogenetic considerations with subunit beta.</title>
        <authorList>
            <person name="Hensel M."/>
            <person name="Lill H."/>
            <person name="Schmid R."/>
            <person name="Deckers-Hebestreit G."/>
            <person name="Altendorf K."/>
        </authorList>
    </citation>
    <scope>NUCLEOTIDE SEQUENCE [GENOMIC DNA]</scope>
    <source>
        <strain>66 / 1326</strain>
    </source>
</reference>
<evidence type="ECO:0000255" key="1"/>
<evidence type="ECO:0000305" key="2"/>
<keyword id="KW-1003">Cell membrane</keyword>
<keyword id="KW-0138">CF(0)</keyword>
<keyword id="KW-0375">Hydrogen ion transport</keyword>
<keyword id="KW-0406">Ion transport</keyword>
<keyword id="KW-0472">Membrane</keyword>
<keyword id="KW-0812">Transmembrane</keyword>
<keyword id="KW-1133">Transmembrane helix</keyword>
<keyword id="KW-0813">Transport</keyword>
<proteinExistence type="inferred from homology"/>